<accession>F8VPU2</accession>
<accession>C4IXU2</accession>
<evidence type="ECO:0000250" key="1"/>
<evidence type="ECO:0000250" key="2">
    <source>
        <dbReference type="UniProtKB" id="Q9Y4F1"/>
    </source>
</evidence>
<evidence type="ECO:0000255" key="3">
    <source>
        <dbReference type="PROSITE-ProRule" id="PRU00062"/>
    </source>
</evidence>
<evidence type="ECO:0000255" key="4">
    <source>
        <dbReference type="PROSITE-ProRule" id="PRU00084"/>
    </source>
</evidence>
<evidence type="ECO:0000255" key="5">
    <source>
        <dbReference type="PROSITE-ProRule" id="PRU00145"/>
    </source>
</evidence>
<evidence type="ECO:0000256" key="6">
    <source>
        <dbReference type="SAM" id="MobiDB-lite"/>
    </source>
</evidence>
<evidence type="ECO:0000269" key="7">
    <source>
    </source>
</evidence>
<evidence type="ECO:0000305" key="8"/>
<evidence type="ECO:0007744" key="9">
    <source>
    </source>
</evidence>
<evidence type="ECO:0007744" key="10">
    <source>
    </source>
</evidence>
<evidence type="ECO:0007744" key="11">
    <source>
    </source>
</evidence>
<comment type="function">
    <text evidence="1">Functions as a guanine nucleotide exchange factor for RAC1. May play a role in semaphorin signaling. Plays a role in the assembly and disassembly of dendritic filopodia, the formation of dendritic spines, regulation of dendrite length and ultimately the formation of synapses (By similarity).</text>
</comment>
<comment type="subunit">
    <text evidence="1">Interacts with CADM1. Interacts with RAC1 (By similarity).</text>
</comment>
<comment type="subcellular location">
    <subcellularLocation>
        <location evidence="7">Cell membrane</location>
        <topology evidence="7">Peripheral membrane protein</topology>
        <orientation evidence="7">Cytoplasmic side</orientation>
    </subcellularLocation>
    <subcellularLocation>
        <location evidence="7">Synapse</location>
    </subcellularLocation>
    <subcellularLocation>
        <location evidence="1">Synapse</location>
        <location evidence="1">Synaptosome</location>
    </subcellularLocation>
    <subcellularLocation>
        <location evidence="1">Cytoplasm</location>
        <location evidence="1">Cytosol</location>
    </subcellularLocation>
    <subcellularLocation>
        <location evidence="1">Cell projection</location>
        <location evidence="1">Filopodium</location>
    </subcellularLocation>
    <subcellularLocation>
        <location evidence="1">Cell projection</location>
        <location evidence="1">Dendrite</location>
    </subcellularLocation>
    <subcellularLocation>
        <location evidence="1">Cell projection</location>
        <location evidence="1">Dendritic spine</location>
    </subcellularLocation>
    <text evidence="1">Recruited to the cell membrane via interaction with CADM1.</text>
</comment>
<comment type="tissue specificity">
    <text evidence="7">Detected in brain cortex, hippocampus, striatum, olfactory bulb, cerebellum and hindbrain (at protein level).</text>
</comment>
<comment type="domain">
    <text evidence="1">Intramolecular interaction between the DH domain and the PH domains can stabilize the protein in an autoinhibited conformation.</text>
</comment>
<sequence length="1048" mass="118875">MGEIEQKPTPASRLGAPENSGISTLERGQKPPPTPSGKLMTVKIQMLDDTQEAFEVPQRAPGKVLFDAVCNHLNLVEGDYFGLEFPDHRKIVVWLDLLKPIVKQIRRPKHVVVKFVVKFFPPDHTQLQEELTRYLFALQVKQDLAQGRLTCNDTSAALLISHIVQSEIGDFDEALDREHLAKNKYVPQQDALEDRIMEFHHSHVGQTPAESDFQLLEVARRLEMYGIRLHPAKDREGTKINLAVANTGILVFQGFTKINAFNWAKVRKLSFKRKRFLIKLRPDVNSSYQDTLEFLMAGRDFCKSFWKICVEHHAFFRLFEEPKPKPKPVLFSRGSSFRFSGRTQKQVLDYVKEGGHKKVQFERKHSKIHSTRSLVSQPTAPNSEVPKQSPQSASLTFGEGTESPGGQSCQQAKETKACTLELGPHQSPALPKSPPGSKAADGTTVVPPEEEEEEEGGKDGIRPSNPQPPQPSTGSLTGSPHLSELSINSQGGAAPANVTLSPNLSPDNKQASPLISPLLNDQACPRTDDEEEGRRKRFPTDKAYYIAKEVSTTERTYLKDLEVIASWFQSTVSKEDSMPEALKSLIFPNFEPLHKFHTNFLKEIEQRLALWEGRSNAHVRGDYQRIGDVMLKNIQGMKHLAAHLWKHSEALEALETSIKGSRRLEHFCRDFELQKVCYLPLNTFLLRPLHRLMHYKHVLERLCKHHPPNHADFRDCRAALAEITEMVAQLHGTMIKMENFQKLHELKKDLIGIDNLVTPGREFIRLGSLSKLSGKGLQQRMFFLFNDVLLYTSRGLTASNQFKVHGQLPLYGMTIEESEEEWGVPHCLTLRGQRQSIIVAASSRSEMEKWMEDIQMAIDLAEKSNGPTPELLASSPPDNKSPDEATAADQESEDDLSASRTSLERQAPHRGNTMVHVCWHRSTSVSMVDFSIAVENQLSGNLLRKFKNSNGWQKLWVVFTNFCLFFYKSHQDSHPLASLPLLGYSLTIPSESENIHKDYVFKLHFKSHVYYFRAESEYTFERWMEVIRSATSSASRAHILSHKESHLY</sequence>
<proteinExistence type="evidence at protein level"/>
<reference key="1">
    <citation type="journal article" date="2009" name="PLoS Biol.">
        <title>Lineage-specific biology revealed by a finished genome assembly of the mouse.</title>
        <authorList>
            <person name="Church D.M."/>
            <person name="Goodstadt L."/>
            <person name="Hillier L.W."/>
            <person name="Zody M.C."/>
            <person name="Goldstein S."/>
            <person name="She X."/>
            <person name="Bult C.J."/>
            <person name="Agarwala R."/>
            <person name="Cherry J.L."/>
            <person name="DiCuccio M."/>
            <person name="Hlavina W."/>
            <person name="Kapustin Y."/>
            <person name="Meric P."/>
            <person name="Maglott D."/>
            <person name="Birtle Z."/>
            <person name="Marques A.C."/>
            <person name="Graves T."/>
            <person name="Zhou S."/>
            <person name="Teague B."/>
            <person name="Potamousis K."/>
            <person name="Churas C."/>
            <person name="Place M."/>
            <person name="Herschleb J."/>
            <person name="Runnheim R."/>
            <person name="Forrest D."/>
            <person name="Amos-Landgraf J."/>
            <person name="Schwartz D.C."/>
            <person name="Cheng Z."/>
            <person name="Lindblad-Toh K."/>
            <person name="Eichler E.E."/>
            <person name="Ponting C.P."/>
        </authorList>
    </citation>
    <scope>NUCLEOTIDE SEQUENCE [LARGE SCALE GENOMIC DNA]</scope>
    <source>
        <strain>C57BL/6J</strain>
    </source>
</reference>
<reference key="2">
    <citation type="journal article" date="2004" name="Genome Res.">
        <title>The status, quality, and expansion of the NIH full-length cDNA project: the Mammalian Gene Collection (MGC).</title>
        <authorList>
            <consortium name="The MGC Project Team"/>
        </authorList>
    </citation>
    <scope>NUCLEOTIDE SEQUENCE [LARGE SCALE MRNA] OF 23-1048</scope>
    <source>
        <tissue>Brain</tissue>
    </source>
</reference>
<reference key="3">
    <citation type="journal article" date="2007" name="Proc. Natl. Acad. Sci. U.S.A.">
        <title>Large-scale phosphorylation analysis of mouse liver.</title>
        <authorList>
            <person name="Villen J."/>
            <person name="Beausoleil S.A."/>
            <person name="Gerber S.A."/>
            <person name="Gygi S.P."/>
        </authorList>
    </citation>
    <scope>PHOSPHORYLATION [LARGE SCALE ANALYSIS] AT SER-373; SER-427 AND SER-892</scope>
    <scope>IDENTIFICATION BY MASS SPECTROMETRY [LARGE SCALE ANALYSIS]</scope>
    <source>
        <tissue>Liver</tissue>
    </source>
</reference>
<reference key="4">
    <citation type="journal article" date="2009" name="Mol. Cell. Proteomics">
        <title>Large scale localization of protein phosphorylation by use of electron capture dissociation mass spectrometry.</title>
        <authorList>
            <person name="Sweet S.M."/>
            <person name="Bailey C.M."/>
            <person name="Cunningham D.L."/>
            <person name="Heath J.K."/>
            <person name="Cooper H.J."/>
        </authorList>
    </citation>
    <scope>PHOSPHORYLATION [LARGE SCALE ANALYSIS] AT THR-24</scope>
    <scope>IDENTIFICATION BY MASS SPECTROMETRY [LARGE SCALE ANALYSIS]</scope>
    <source>
        <tissue>Embryonic fibroblast</tissue>
    </source>
</reference>
<reference key="5">
    <citation type="journal article" date="2010" name="Cell">
        <title>A tissue-specific atlas of mouse protein phosphorylation and expression.</title>
        <authorList>
            <person name="Huttlin E.L."/>
            <person name="Jedrychowski M.P."/>
            <person name="Elias J.E."/>
            <person name="Goswami T."/>
            <person name="Rad R."/>
            <person name="Beausoleil S.A."/>
            <person name="Villen J."/>
            <person name="Haas W."/>
            <person name="Sowa M.E."/>
            <person name="Gygi S.P."/>
        </authorList>
    </citation>
    <scope>PHOSPHORYLATION [LARGE SCALE ANALYSIS] AT SER-20; SER-23; THR-24; SER-373; SER-389; SER-403; SER-427; SER-433; SER-437; SER-512; SER-875; SER-881; SER-892; SER-899 AND SER-902</scope>
    <scope>IDENTIFICATION BY MASS SPECTROMETRY [LARGE SCALE ANALYSIS]</scope>
    <source>
        <tissue>Brain</tissue>
        <tissue>Brown adipose tissue</tissue>
        <tissue>Heart</tissue>
        <tissue>Kidney</tissue>
        <tissue>Liver</tissue>
        <tissue>Lung</tissue>
        <tissue>Pancreas</tissue>
        <tissue>Spleen</tissue>
        <tissue>Testis</tissue>
    </source>
</reference>
<reference key="6">
    <citation type="journal article" date="2012" name="J. Cell Biol.">
        <title>The novel synaptogenic protein Farp1 links postsynaptic cytoskeletal dynamics and transsynaptic organization.</title>
        <authorList>
            <person name="Cheadle L."/>
            <person name="Biederer T."/>
        </authorList>
    </citation>
    <scope>SUBCELLULAR LOCATION</scope>
    <scope>TISSUE SPECIFICITY</scope>
</reference>
<dbReference type="EMBL" id="AC154618">
    <property type="status" value="NOT_ANNOTATED_CDS"/>
    <property type="molecule type" value="Genomic_DNA"/>
</dbReference>
<dbReference type="EMBL" id="AC165163">
    <property type="status" value="NOT_ANNOTATED_CDS"/>
    <property type="molecule type" value="Genomic_DNA"/>
</dbReference>
<dbReference type="EMBL" id="AC167566">
    <property type="status" value="NOT_ANNOTATED_CDS"/>
    <property type="molecule type" value="Genomic_DNA"/>
</dbReference>
<dbReference type="EMBL" id="BC141229">
    <property type="protein sequence ID" value="AAI41230.1"/>
    <property type="molecule type" value="mRNA"/>
</dbReference>
<dbReference type="CCDS" id="CCDS37015.1"/>
<dbReference type="RefSeq" id="NP_598843.3">
    <property type="nucleotide sequence ID" value="NM_134082.3"/>
</dbReference>
<dbReference type="RefSeq" id="XP_006518977.1">
    <property type="nucleotide sequence ID" value="XM_006518914.5"/>
</dbReference>
<dbReference type="RefSeq" id="XP_030103636.1">
    <property type="nucleotide sequence ID" value="XM_030247776.2"/>
</dbReference>
<dbReference type="SMR" id="F8VPU2"/>
<dbReference type="BioGRID" id="230134">
    <property type="interactions" value="12"/>
</dbReference>
<dbReference type="FunCoup" id="F8VPU2">
    <property type="interactions" value="357"/>
</dbReference>
<dbReference type="IntAct" id="F8VPU2">
    <property type="interactions" value="3"/>
</dbReference>
<dbReference type="MINT" id="F8VPU2"/>
<dbReference type="STRING" id="10090.ENSMUSP00000026635"/>
<dbReference type="GlyGen" id="F8VPU2">
    <property type="glycosylation" value="3 sites, 1 O-linked glycan (1 site)"/>
</dbReference>
<dbReference type="iPTMnet" id="F8VPU2"/>
<dbReference type="PhosphoSitePlus" id="F8VPU2"/>
<dbReference type="SwissPalm" id="F8VPU2"/>
<dbReference type="jPOST" id="F8VPU2"/>
<dbReference type="PaxDb" id="10090-ENSMUSP00000026635"/>
<dbReference type="PeptideAtlas" id="F8VPU2"/>
<dbReference type="ProteomicsDB" id="267571"/>
<dbReference type="Pumba" id="F8VPU2"/>
<dbReference type="Antibodypedia" id="619">
    <property type="antibodies" value="214 antibodies from 21 providers"/>
</dbReference>
<dbReference type="DNASU" id="223254"/>
<dbReference type="Ensembl" id="ENSMUST00000026635.8">
    <property type="protein sequence ID" value="ENSMUSP00000026635.7"/>
    <property type="gene ID" value="ENSMUSG00000025555.15"/>
</dbReference>
<dbReference type="GeneID" id="223254"/>
<dbReference type="KEGG" id="mmu:223254"/>
<dbReference type="UCSC" id="uc007vaa.1">
    <property type="organism name" value="mouse"/>
</dbReference>
<dbReference type="AGR" id="MGI:2446173"/>
<dbReference type="CTD" id="10160"/>
<dbReference type="MGI" id="MGI:2446173">
    <property type="gene designation" value="Farp1"/>
</dbReference>
<dbReference type="VEuPathDB" id="HostDB:ENSMUSG00000025555"/>
<dbReference type="eggNOG" id="KOG3531">
    <property type="taxonomic scope" value="Eukaryota"/>
</dbReference>
<dbReference type="GeneTree" id="ENSGT00940000155318"/>
<dbReference type="HOGENOM" id="CLU_012301_0_0_1"/>
<dbReference type="InParanoid" id="F8VPU2"/>
<dbReference type="OMA" id="PHCLTLC"/>
<dbReference type="OrthoDB" id="9990815at2759"/>
<dbReference type="PhylomeDB" id="F8VPU2"/>
<dbReference type="TreeFam" id="TF351276"/>
<dbReference type="Reactome" id="R-MMU-8980692">
    <property type="pathway name" value="RHOA GTPase cycle"/>
</dbReference>
<dbReference type="Reactome" id="R-MMU-9013148">
    <property type="pathway name" value="CDC42 GTPase cycle"/>
</dbReference>
<dbReference type="Reactome" id="R-MMU-9013149">
    <property type="pathway name" value="RAC1 GTPase cycle"/>
</dbReference>
<dbReference type="Reactome" id="R-MMU-9035034">
    <property type="pathway name" value="RHOF GTPase cycle"/>
</dbReference>
<dbReference type="BioGRID-ORCS" id="223254">
    <property type="hits" value="5 hits in 78 CRISPR screens"/>
</dbReference>
<dbReference type="CD-CODE" id="CE726F99">
    <property type="entry name" value="Postsynaptic density"/>
</dbReference>
<dbReference type="ChiTaRS" id="Farp1">
    <property type="organism name" value="mouse"/>
</dbReference>
<dbReference type="PRO" id="PR:F8VPU2"/>
<dbReference type="Proteomes" id="UP000000589">
    <property type="component" value="Chromosome 14"/>
</dbReference>
<dbReference type="RNAct" id="F8VPU2">
    <property type="molecule type" value="protein"/>
</dbReference>
<dbReference type="Bgee" id="ENSMUSG00000025555">
    <property type="expression patterns" value="Expressed in humerus cartilage element and 243 other cell types or tissues"/>
</dbReference>
<dbReference type="ExpressionAtlas" id="F8VPU2">
    <property type="expression patterns" value="baseline and differential"/>
</dbReference>
<dbReference type="GO" id="GO:0009898">
    <property type="term" value="C:cytoplasmic side of plasma membrane"/>
    <property type="evidence" value="ECO:0000250"/>
    <property type="project" value="UniProtKB"/>
</dbReference>
<dbReference type="GO" id="GO:0005856">
    <property type="term" value="C:cytoskeleton"/>
    <property type="evidence" value="ECO:0007669"/>
    <property type="project" value="InterPro"/>
</dbReference>
<dbReference type="GO" id="GO:0005829">
    <property type="term" value="C:cytosol"/>
    <property type="evidence" value="ECO:0000250"/>
    <property type="project" value="UniProtKB"/>
</dbReference>
<dbReference type="GO" id="GO:0030425">
    <property type="term" value="C:dendrite"/>
    <property type="evidence" value="ECO:0000250"/>
    <property type="project" value="UniProtKB"/>
</dbReference>
<dbReference type="GO" id="GO:0043197">
    <property type="term" value="C:dendritic spine"/>
    <property type="evidence" value="ECO:0007669"/>
    <property type="project" value="UniProtKB-SubCell"/>
</dbReference>
<dbReference type="GO" id="GO:0098890">
    <property type="term" value="C:extrinsic component of postsynaptic membrane"/>
    <property type="evidence" value="ECO:0007669"/>
    <property type="project" value="Ensembl"/>
</dbReference>
<dbReference type="GO" id="GO:0030175">
    <property type="term" value="C:filopodium"/>
    <property type="evidence" value="ECO:0007669"/>
    <property type="project" value="UniProtKB-SubCell"/>
</dbReference>
<dbReference type="GO" id="GO:0098978">
    <property type="term" value="C:glutamatergic synapse"/>
    <property type="evidence" value="ECO:0007669"/>
    <property type="project" value="Ensembl"/>
</dbReference>
<dbReference type="GO" id="GO:0008092">
    <property type="term" value="F:cytoskeletal protein binding"/>
    <property type="evidence" value="ECO:0007669"/>
    <property type="project" value="InterPro"/>
</dbReference>
<dbReference type="GO" id="GO:0005085">
    <property type="term" value="F:guanyl-nucleotide exchange factor activity"/>
    <property type="evidence" value="ECO:0000316"/>
    <property type="project" value="MGI"/>
</dbReference>
<dbReference type="GO" id="GO:0031267">
    <property type="term" value="F:small GTPase binding"/>
    <property type="evidence" value="ECO:0007669"/>
    <property type="project" value="Ensembl"/>
</dbReference>
<dbReference type="GO" id="GO:0048813">
    <property type="term" value="P:dendrite morphogenesis"/>
    <property type="evidence" value="ECO:0000250"/>
    <property type="project" value="UniProtKB"/>
</dbReference>
<dbReference type="GO" id="GO:0007167">
    <property type="term" value="P:enzyme-linked receptor protein signaling pathway"/>
    <property type="evidence" value="ECO:0000316"/>
    <property type="project" value="MGI"/>
</dbReference>
<dbReference type="GO" id="GO:1904395">
    <property type="term" value="P:positive regulation of skeletal muscle acetylcholine-gated channel clustering"/>
    <property type="evidence" value="ECO:0000316"/>
    <property type="project" value="MGI"/>
</dbReference>
<dbReference type="GO" id="GO:0098974">
    <property type="term" value="P:postsynaptic actin cytoskeleton organization"/>
    <property type="evidence" value="ECO:0007669"/>
    <property type="project" value="Ensembl"/>
</dbReference>
<dbReference type="GO" id="GO:0016601">
    <property type="term" value="P:Rac protein signal transduction"/>
    <property type="evidence" value="ECO:0000316"/>
    <property type="project" value="MGI"/>
</dbReference>
<dbReference type="GO" id="GO:1905606">
    <property type="term" value="P:regulation of presynapse assembly"/>
    <property type="evidence" value="ECO:0007669"/>
    <property type="project" value="Ensembl"/>
</dbReference>
<dbReference type="GO" id="GO:0098942">
    <property type="term" value="P:retrograde trans-synaptic signaling by trans-synaptic protein complex"/>
    <property type="evidence" value="ECO:0007669"/>
    <property type="project" value="Ensembl"/>
</dbReference>
<dbReference type="GO" id="GO:0007416">
    <property type="term" value="P:synapse assembly"/>
    <property type="evidence" value="ECO:0000250"/>
    <property type="project" value="UniProtKB"/>
</dbReference>
<dbReference type="CDD" id="cd14473">
    <property type="entry name" value="FERM_B-lobe"/>
    <property type="match status" value="1"/>
</dbReference>
<dbReference type="CDD" id="cd13193">
    <property type="entry name" value="FERM_C_FARP1-like"/>
    <property type="match status" value="1"/>
</dbReference>
<dbReference type="CDD" id="cd01220">
    <property type="entry name" value="PH1_FARP1-like"/>
    <property type="match status" value="1"/>
</dbReference>
<dbReference type="CDD" id="cd13235">
    <property type="entry name" value="PH2_FARP1-like"/>
    <property type="match status" value="1"/>
</dbReference>
<dbReference type="CDD" id="cd00160">
    <property type="entry name" value="RhoGEF"/>
    <property type="match status" value="1"/>
</dbReference>
<dbReference type="FunFam" id="2.30.29.30:FF:000002">
    <property type="entry name" value="Band 4.1-like protein 5 isoform 1"/>
    <property type="match status" value="1"/>
</dbReference>
<dbReference type="FunFam" id="3.10.20.90:FF:000040">
    <property type="entry name" value="FERM, RhoGEF and pleckstrin domain-containing protein"/>
    <property type="match status" value="1"/>
</dbReference>
<dbReference type="FunFam" id="1.20.80.10:FF:000005">
    <property type="entry name" value="FERM, RhoGEF and pleckstrin domain-containing protein 1"/>
    <property type="match status" value="1"/>
</dbReference>
<dbReference type="FunFam" id="1.20.900.10:FF:000021">
    <property type="entry name" value="FERM, RhoGEF and pleckstrin domain-containing protein 1"/>
    <property type="match status" value="1"/>
</dbReference>
<dbReference type="FunFam" id="2.30.29.30:FF:000046">
    <property type="entry name" value="FERM, RhoGEF and pleckstrin domain-containing protein 1"/>
    <property type="match status" value="1"/>
</dbReference>
<dbReference type="Gene3D" id="1.20.80.10">
    <property type="match status" value="1"/>
</dbReference>
<dbReference type="Gene3D" id="1.20.900.10">
    <property type="entry name" value="Dbl homology (DH) domain"/>
    <property type="match status" value="1"/>
</dbReference>
<dbReference type="Gene3D" id="3.10.20.90">
    <property type="entry name" value="Phosphatidylinositol 3-kinase Catalytic Subunit, Chain A, domain 1"/>
    <property type="match status" value="1"/>
</dbReference>
<dbReference type="Gene3D" id="2.30.29.30">
    <property type="entry name" value="Pleckstrin-homology domain (PH domain)/Phosphotyrosine-binding domain (PTB)"/>
    <property type="match status" value="3"/>
</dbReference>
<dbReference type="InterPro" id="IPR019749">
    <property type="entry name" value="Band_41_domain"/>
</dbReference>
<dbReference type="InterPro" id="IPR035899">
    <property type="entry name" value="DBL_dom_sf"/>
</dbReference>
<dbReference type="InterPro" id="IPR000219">
    <property type="entry name" value="DH_dom"/>
</dbReference>
<dbReference type="InterPro" id="IPR000798">
    <property type="entry name" value="Ez/rad/moesin-like"/>
</dbReference>
<dbReference type="InterPro" id="IPR014847">
    <property type="entry name" value="FA"/>
</dbReference>
<dbReference type="InterPro" id="IPR041788">
    <property type="entry name" value="FARP1/FARP2/FRMD7_FERM_C"/>
</dbReference>
<dbReference type="InterPro" id="IPR014352">
    <property type="entry name" value="FERM/acyl-CoA-bd_prot_sf"/>
</dbReference>
<dbReference type="InterPro" id="IPR035963">
    <property type="entry name" value="FERM_2"/>
</dbReference>
<dbReference type="InterPro" id="IPR019748">
    <property type="entry name" value="FERM_central"/>
</dbReference>
<dbReference type="InterPro" id="IPR019747">
    <property type="entry name" value="FERM_CS"/>
</dbReference>
<dbReference type="InterPro" id="IPR000299">
    <property type="entry name" value="FERM_domain"/>
</dbReference>
<dbReference type="InterPro" id="IPR018979">
    <property type="entry name" value="FERM_N"/>
</dbReference>
<dbReference type="InterPro" id="IPR018980">
    <property type="entry name" value="FERM_PH-like_C"/>
</dbReference>
<dbReference type="InterPro" id="IPR011993">
    <property type="entry name" value="PH-like_dom_sf"/>
</dbReference>
<dbReference type="InterPro" id="IPR001849">
    <property type="entry name" value="PH_domain"/>
</dbReference>
<dbReference type="InterPro" id="IPR051835">
    <property type="entry name" value="RAC1-GEF"/>
</dbReference>
<dbReference type="InterPro" id="IPR029071">
    <property type="entry name" value="Ubiquitin-like_domsf"/>
</dbReference>
<dbReference type="PANTHER" id="PTHR45858">
    <property type="entry name" value="FERM DOMAIN CONTAINING PROTEIN"/>
    <property type="match status" value="1"/>
</dbReference>
<dbReference type="PANTHER" id="PTHR45858:SF2">
    <property type="entry name" value="FERM, ARHGEF AND PLECKSTRIN DOMAIN-CONTAINING PROTEIN 1"/>
    <property type="match status" value="1"/>
</dbReference>
<dbReference type="Pfam" id="PF08736">
    <property type="entry name" value="FA"/>
    <property type="match status" value="1"/>
</dbReference>
<dbReference type="Pfam" id="PF09380">
    <property type="entry name" value="FERM_C"/>
    <property type="match status" value="1"/>
</dbReference>
<dbReference type="Pfam" id="PF00373">
    <property type="entry name" value="FERM_M"/>
    <property type="match status" value="1"/>
</dbReference>
<dbReference type="Pfam" id="PF09379">
    <property type="entry name" value="FERM_N"/>
    <property type="match status" value="1"/>
</dbReference>
<dbReference type="Pfam" id="PF00169">
    <property type="entry name" value="PH"/>
    <property type="match status" value="2"/>
</dbReference>
<dbReference type="Pfam" id="PF00621">
    <property type="entry name" value="RhoGEF"/>
    <property type="match status" value="1"/>
</dbReference>
<dbReference type="PRINTS" id="PR00935">
    <property type="entry name" value="BAND41"/>
</dbReference>
<dbReference type="PRINTS" id="PR00661">
    <property type="entry name" value="ERMFAMILY"/>
</dbReference>
<dbReference type="SMART" id="SM00295">
    <property type="entry name" value="B41"/>
    <property type="match status" value="1"/>
</dbReference>
<dbReference type="SMART" id="SM01195">
    <property type="entry name" value="FA"/>
    <property type="match status" value="1"/>
</dbReference>
<dbReference type="SMART" id="SM01196">
    <property type="entry name" value="FERM_C"/>
    <property type="match status" value="1"/>
</dbReference>
<dbReference type="SMART" id="SM00233">
    <property type="entry name" value="PH"/>
    <property type="match status" value="2"/>
</dbReference>
<dbReference type="SMART" id="SM00325">
    <property type="entry name" value="RhoGEF"/>
    <property type="match status" value="1"/>
</dbReference>
<dbReference type="SUPFAM" id="SSF48065">
    <property type="entry name" value="DBL homology domain (DH-domain)"/>
    <property type="match status" value="1"/>
</dbReference>
<dbReference type="SUPFAM" id="SSF50729">
    <property type="entry name" value="PH domain-like"/>
    <property type="match status" value="3"/>
</dbReference>
<dbReference type="SUPFAM" id="SSF47031">
    <property type="entry name" value="Second domain of FERM"/>
    <property type="match status" value="1"/>
</dbReference>
<dbReference type="SUPFAM" id="SSF54236">
    <property type="entry name" value="Ubiquitin-like"/>
    <property type="match status" value="1"/>
</dbReference>
<dbReference type="PROSITE" id="PS50010">
    <property type="entry name" value="DH_2"/>
    <property type="match status" value="1"/>
</dbReference>
<dbReference type="PROSITE" id="PS00660">
    <property type="entry name" value="FERM_1"/>
    <property type="match status" value="1"/>
</dbReference>
<dbReference type="PROSITE" id="PS50057">
    <property type="entry name" value="FERM_3"/>
    <property type="match status" value="1"/>
</dbReference>
<dbReference type="PROSITE" id="PS50003">
    <property type="entry name" value="PH_DOMAIN"/>
    <property type="match status" value="2"/>
</dbReference>
<feature type="chain" id="PRO_0000422336" description="FERM, ARHGEF and pleckstrin domain-containing protein 1">
    <location>
        <begin position="1"/>
        <end position="1048"/>
    </location>
</feature>
<feature type="domain" description="FERM" evidence="4">
    <location>
        <begin position="40"/>
        <end position="320"/>
    </location>
</feature>
<feature type="domain" description="DH" evidence="3">
    <location>
        <begin position="542"/>
        <end position="733"/>
    </location>
</feature>
<feature type="domain" description="PH 1" evidence="5">
    <location>
        <begin position="762"/>
        <end position="859"/>
    </location>
</feature>
<feature type="domain" description="PH 2" evidence="5">
    <location>
        <begin position="935"/>
        <end position="1032"/>
    </location>
</feature>
<feature type="region of interest" description="Disordered" evidence="6">
    <location>
        <begin position="1"/>
        <end position="37"/>
    </location>
</feature>
<feature type="region of interest" description="Disordered" evidence="6">
    <location>
        <begin position="361"/>
        <end position="536"/>
    </location>
</feature>
<feature type="region of interest" description="Disordered" evidence="6">
    <location>
        <begin position="865"/>
        <end position="907"/>
    </location>
</feature>
<feature type="compositionally biased region" description="Polar residues" evidence="6">
    <location>
        <begin position="371"/>
        <end position="395"/>
    </location>
</feature>
<feature type="compositionally biased region" description="Polar residues" evidence="6">
    <location>
        <begin position="472"/>
        <end position="491"/>
    </location>
</feature>
<feature type="compositionally biased region" description="Polar residues" evidence="6">
    <location>
        <begin position="498"/>
        <end position="513"/>
    </location>
</feature>
<feature type="modified residue" description="Phosphoserine" evidence="11">
    <location>
        <position position="20"/>
    </location>
</feature>
<feature type="modified residue" description="Phosphoserine" evidence="11">
    <location>
        <position position="23"/>
    </location>
</feature>
<feature type="modified residue" description="Phosphothreonine" evidence="10 11">
    <location>
        <position position="24"/>
    </location>
</feature>
<feature type="modified residue" description="Phosphoserine" evidence="2">
    <location>
        <position position="340"/>
    </location>
</feature>
<feature type="modified residue" description="Phosphoserine" evidence="9 11">
    <location>
        <position position="373"/>
    </location>
</feature>
<feature type="modified residue" description="Phosphoserine" evidence="11">
    <location>
        <position position="389"/>
    </location>
</feature>
<feature type="modified residue" description="Phosphoserine" evidence="11">
    <location>
        <position position="403"/>
    </location>
</feature>
<feature type="modified residue" description="Phosphoserine" evidence="9 11">
    <location>
        <position position="427"/>
    </location>
</feature>
<feature type="modified residue" description="Phosphoserine" evidence="11">
    <location>
        <position position="433"/>
    </location>
</feature>
<feature type="modified residue" description="Phosphoserine" evidence="11">
    <location>
        <position position="437"/>
    </location>
</feature>
<feature type="modified residue" description="Phosphoserine" evidence="11">
    <location>
        <position position="512"/>
    </location>
</feature>
<feature type="modified residue" description="Phosphoserine" evidence="2">
    <location>
        <position position="516"/>
    </location>
</feature>
<feature type="modified residue" description="Phosphoserine" evidence="2">
    <location>
        <position position="836"/>
    </location>
</feature>
<feature type="modified residue" description="Phosphoserine" evidence="11">
    <location>
        <position position="875"/>
    </location>
</feature>
<feature type="modified residue" description="Phosphoserine" evidence="11">
    <location>
        <position position="881"/>
    </location>
</feature>
<feature type="modified residue" description="Phosphothreonine" evidence="2">
    <location>
        <position position="886"/>
    </location>
</feature>
<feature type="modified residue" description="Phosphoserine" evidence="9 11">
    <location>
        <position position="892"/>
    </location>
</feature>
<feature type="modified residue" description="Phosphoserine" evidence="11">
    <location>
        <position position="899"/>
    </location>
</feature>
<feature type="modified residue" description="Phosphoserine" evidence="11">
    <location>
        <position position="902"/>
    </location>
</feature>
<feature type="sequence conflict" description="In Ref. 2; AAI41230." evidence="8" ref="2">
    <original>V</original>
    <variation>I</variation>
    <location>
        <position position="619"/>
    </location>
</feature>
<feature type="sequence conflict" description="In Ref. 2; AAI41230." evidence="8" ref="2">
    <original>I</original>
    <variation>V</variation>
    <location>
        <position position="751"/>
    </location>
</feature>
<feature type="sequence conflict" description="In Ref. 2; AAI41230." evidence="8" ref="2">
    <original>T</original>
    <variation>I</variation>
    <location>
        <position position="758"/>
    </location>
</feature>
<protein>
    <recommendedName>
        <fullName>FERM, ARHGEF and pleckstrin domain-containing protein 1</fullName>
    </recommendedName>
    <alternativeName>
        <fullName>FERM, RhoGEF and pleckstrin domain-containing protein 1</fullName>
    </alternativeName>
</protein>
<gene>
    <name type="primary">Farp1</name>
</gene>
<name>FARP1_MOUSE</name>
<keyword id="KW-1003">Cell membrane</keyword>
<keyword id="KW-0966">Cell projection</keyword>
<keyword id="KW-0963">Cytoplasm</keyword>
<keyword id="KW-0217">Developmental protein</keyword>
<keyword id="KW-0344">Guanine-nucleotide releasing factor</keyword>
<keyword id="KW-0472">Membrane</keyword>
<keyword id="KW-0597">Phosphoprotein</keyword>
<keyword id="KW-1185">Reference proteome</keyword>
<keyword id="KW-0677">Repeat</keyword>
<keyword id="KW-0770">Synapse</keyword>
<keyword id="KW-0771">Synaptosome</keyword>
<organism>
    <name type="scientific">Mus musculus</name>
    <name type="common">Mouse</name>
    <dbReference type="NCBI Taxonomy" id="10090"/>
    <lineage>
        <taxon>Eukaryota</taxon>
        <taxon>Metazoa</taxon>
        <taxon>Chordata</taxon>
        <taxon>Craniata</taxon>
        <taxon>Vertebrata</taxon>
        <taxon>Euteleostomi</taxon>
        <taxon>Mammalia</taxon>
        <taxon>Eutheria</taxon>
        <taxon>Euarchontoglires</taxon>
        <taxon>Glires</taxon>
        <taxon>Rodentia</taxon>
        <taxon>Myomorpha</taxon>
        <taxon>Muroidea</taxon>
        <taxon>Muridae</taxon>
        <taxon>Murinae</taxon>
        <taxon>Mus</taxon>
        <taxon>Mus</taxon>
    </lineage>
</organism>